<protein>
    <recommendedName>
        <fullName evidence="4">Carnosine N-methyltransferase 2</fullName>
        <ecNumber evidence="2">2.1.1.22</ecNumber>
    </recommendedName>
    <alternativeName>
        <fullName evidence="3">Histamine N-methyltransferase-like</fullName>
        <shortName evidence="3">HNMT-like</shortName>
    </alternativeName>
</protein>
<accession>U3NEE3</accession>
<evidence type="ECO:0000255" key="1">
    <source>
        <dbReference type="PROSITE-ProRule" id="PRU00929"/>
    </source>
</evidence>
<evidence type="ECO:0000269" key="2">
    <source>
    </source>
</evidence>
<evidence type="ECO:0000303" key="3">
    <source>
    </source>
</evidence>
<evidence type="ECO:0000305" key="4"/>
<evidence type="ECO:0000312" key="5">
    <source>
        <dbReference type="EMBL" id="AGW32084.1"/>
    </source>
</evidence>
<organism>
    <name type="scientific">Gallus gallus</name>
    <name type="common">Chicken</name>
    <dbReference type="NCBI Taxonomy" id="9031"/>
    <lineage>
        <taxon>Eukaryota</taxon>
        <taxon>Metazoa</taxon>
        <taxon>Chordata</taxon>
        <taxon>Craniata</taxon>
        <taxon>Vertebrata</taxon>
        <taxon>Euteleostomi</taxon>
        <taxon>Archelosauria</taxon>
        <taxon>Archosauria</taxon>
        <taxon>Dinosauria</taxon>
        <taxon>Saurischia</taxon>
        <taxon>Theropoda</taxon>
        <taxon>Coelurosauria</taxon>
        <taxon>Aves</taxon>
        <taxon>Neognathae</taxon>
        <taxon>Galloanserae</taxon>
        <taxon>Galliformes</taxon>
        <taxon>Phasianidae</taxon>
        <taxon>Phasianinae</taxon>
        <taxon>Gallus</taxon>
    </lineage>
</organism>
<name>HNMTL_CHICK</name>
<keyword id="KW-0489">Methyltransferase</keyword>
<keyword id="KW-1185">Reference proteome</keyword>
<keyword id="KW-0949">S-adenosyl-L-methionine</keyword>
<keyword id="KW-0808">Transferase</keyword>
<feature type="chain" id="PRO_0000433614" description="Carnosine N-methyltransferase 2">
    <location>
        <begin position="1"/>
        <end position="322"/>
    </location>
</feature>
<feature type="binding site" evidence="1">
    <location>
        <position position="58"/>
    </location>
    <ligand>
        <name>substrate</name>
    </ligand>
</feature>
<feature type="binding site" evidence="1">
    <location>
        <position position="90"/>
    </location>
    <ligand>
        <name>S-adenosyl-L-methionine</name>
        <dbReference type="ChEBI" id="CHEBI:59789"/>
    </ligand>
</feature>
<feature type="binding site" evidence="1">
    <location>
        <position position="119"/>
    </location>
    <ligand>
        <name>S-adenosyl-L-methionine</name>
        <dbReference type="ChEBI" id="CHEBI:59789"/>
    </ligand>
</feature>
<feature type="binding site" evidence="1">
    <location>
        <position position="150"/>
    </location>
    <ligand>
        <name>S-adenosyl-L-methionine</name>
        <dbReference type="ChEBI" id="CHEBI:59789"/>
    </ligand>
</feature>
<feature type="binding site" evidence="1">
    <location>
        <position position="172"/>
    </location>
    <ligand>
        <name>S-adenosyl-L-methionine</name>
        <dbReference type="ChEBI" id="CHEBI:59789"/>
    </ligand>
</feature>
<feature type="binding site" evidence="1">
    <location>
        <position position="313"/>
    </location>
    <ligand>
        <name>substrate</name>
    </ligand>
</feature>
<proteinExistence type="evidence at protein level"/>
<comment type="function">
    <text evidence="2">N-methyltransferase that mediates the formation of anserine (beta-alanyl-N(Pi)-methyl-L-histidine) from carnosine. Anserine, a methylated derivative of carnosine (beta-alanyl-L-histidine), is an abundant constituent of vertebrate skeletal muscles.</text>
</comment>
<comment type="catalytic activity">
    <reaction evidence="2">
        <text>carnosine + S-adenosyl-L-methionine = anserine + S-adenosyl-L-homocysteine + H(+)</text>
        <dbReference type="Rhea" id="RHEA:14205"/>
        <dbReference type="ChEBI" id="CHEBI:15378"/>
        <dbReference type="ChEBI" id="CHEBI:57485"/>
        <dbReference type="ChEBI" id="CHEBI:57856"/>
        <dbReference type="ChEBI" id="CHEBI:58445"/>
        <dbReference type="ChEBI" id="CHEBI:59789"/>
        <dbReference type="EC" id="2.1.1.22"/>
    </reaction>
</comment>
<comment type="biophysicochemical properties">
    <kinetics>
        <KM evidence="2">1.628 mM for carnosine</KM>
        <KM evidence="2">0.014 mM for S-adenosyl-L-methionine</KM>
        <Vmax evidence="2">51.87 nmol/min/mg enzyme with carnosine as substrate</Vmax>
        <Vmax evidence="2">786.0 nmol/min/mg enzyme with S-adenosyl-L-methionine as substrate</Vmax>
        <text evidence="2">kcat is 0.034 sec(-1) for carnosine. kcat is 0.519 sec(-1) for S-adenosyl-L-methionine.</text>
    </kinetics>
</comment>
<comment type="subunit">
    <text evidence="2">Monomer.</text>
</comment>
<comment type="miscellaneous">
    <text evidence="4">Two different proteins belonging to two different protein families are able to mediate carnosine N-methyltransferase activity in chicken. This protein, which is not conserved in mammals, and another protein (AC F1N9S8), which is conserved from human to yeast.</text>
</comment>
<comment type="similarity">
    <text evidence="1">Belongs to the class I-like SAM-binding methyltransferase superfamily. HNMT family.</text>
</comment>
<sequence>MEPTPEMKRNRLPSMNFEAEILADPHDNSELYVIPSMRSLTAEEYVEAFQSFLDHSTEHQCMDEFNKEVMPHIMAGLGNGKSTINILGVGSGTGEQDLKMIQILQAAHPGVLINNEIIEPNPQHVAAYKELVNRAPDLQGVSFTWHQLTSSEYEQQVKEKNTHKKFDFIHMIQMLYRVEDIPNTIKFFHSCLNHQGKLLIIILSDSSGWASLWKKYRHCLPSTDSGHYITSDSITAVLRKLGIKYHVYEFPSGWDITECFIEGDPAGGHMMDFLTGTKNFLGTAPAALRSRLQEALCQPECSSRKDGRVIFCNNLSMIVAES</sequence>
<dbReference type="EC" id="2.1.1.22" evidence="2"/>
<dbReference type="EMBL" id="KF271750">
    <property type="protein sequence ID" value="AGW32084.1"/>
    <property type="molecule type" value="mRNA"/>
</dbReference>
<dbReference type="EMBL" id="AADN03005426">
    <property type="status" value="NOT_ANNOTATED_CDS"/>
    <property type="molecule type" value="Genomic_DNA"/>
</dbReference>
<dbReference type="RefSeq" id="NP_001305361.1">
    <property type="nucleotide sequence ID" value="NM_001318432.2"/>
</dbReference>
<dbReference type="RefSeq" id="XP_001234740.1">
    <property type="nucleotide sequence ID" value="XM_001234739.3"/>
</dbReference>
<dbReference type="SMR" id="U3NEE3"/>
<dbReference type="FunCoup" id="U3NEE3">
    <property type="interactions" value="8"/>
</dbReference>
<dbReference type="STRING" id="9031.ENSGALP00000056487"/>
<dbReference type="Ensembl" id="ENSGALT00010021740.1">
    <property type="protein sequence ID" value="ENSGALP00010012423.1"/>
    <property type="gene ID" value="ENSGALG00010009112.1"/>
</dbReference>
<dbReference type="GeneID" id="771456"/>
<dbReference type="KEGG" id="gga:771456"/>
<dbReference type="VEuPathDB" id="HostDB:LOC771456"/>
<dbReference type="GeneTree" id="ENSGT00390000002862"/>
<dbReference type="InParanoid" id="U3NEE3"/>
<dbReference type="OMA" id="SGWASIW"/>
<dbReference type="OrthoDB" id="5984880at2759"/>
<dbReference type="BRENDA" id="2.1.1.22">
    <property type="organism ID" value="1306"/>
</dbReference>
<dbReference type="PRO" id="PR:U3NEE3"/>
<dbReference type="Proteomes" id="UP000000539">
    <property type="component" value="Chromosome 7"/>
</dbReference>
<dbReference type="Bgee" id="ENSGALG00000033461">
    <property type="expression patterns" value="Expressed in cerebellum and 4 other cell types or tissues"/>
</dbReference>
<dbReference type="GO" id="GO:0030735">
    <property type="term" value="F:carnosine N-methyltransferase activity"/>
    <property type="evidence" value="ECO:0000314"/>
    <property type="project" value="UniProtKB"/>
</dbReference>
<dbReference type="GO" id="GO:0008170">
    <property type="term" value="F:N-methyltransferase activity"/>
    <property type="evidence" value="ECO:0007669"/>
    <property type="project" value="InterPro"/>
</dbReference>
<dbReference type="GO" id="GO:0035498">
    <property type="term" value="P:carnosine metabolic process"/>
    <property type="evidence" value="ECO:0000314"/>
    <property type="project" value="UniProtKB"/>
</dbReference>
<dbReference type="GO" id="GO:0032259">
    <property type="term" value="P:methylation"/>
    <property type="evidence" value="ECO:0007669"/>
    <property type="project" value="UniProtKB-KW"/>
</dbReference>
<dbReference type="FunFam" id="3.40.50.150:FF:000118">
    <property type="entry name" value="Histamine N-methyltransferase"/>
    <property type="match status" value="1"/>
</dbReference>
<dbReference type="Gene3D" id="3.40.50.150">
    <property type="entry name" value="Vaccinia Virus protein VP39"/>
    <property type="match status" value="1"/>
</dbReference>
<dbReference type="InterPro" id="IPR016673">
    <property type="entry name" value="HHMT-like"/>
</dbReference>
<dbReference type="InterPro" id="IPR029063">
    <property type="entry name" value="SAM-dependent_MTases_sf"/>
</dbReference>
<dbReference type="Pfam" id="PF13489">
    <property type="entry name" value="Methyltransf_23"/>
    <property type="match status" value="1"/>
</dbReference>
<dbReference type="PIRSF" id="PIRSF016616">
    <property type="entry name" value="HHMT"/>
    <property type="match status" value="1"/>
</dbReference>
<dbReference type="SUPFAM" id="SSF53335">
    <property type="entry name" value="S-adenosyl-L-methionine-dependent methyltransferases"/>
    <property type="match status" value="1"/>
</dbReference>
<dbReference type="PROSITE" id="PS51597">
    <property type="entry name" value="SAM_HNMT"/>
    <property type="match status" value="1"/>
</dbReference>
<reference key="1">
    <citation type="journal article" date="2013" name="PLoS ONE">
        <title>Molecular identification of carnosine N-methyltransferase as chicken histamine N-methyltransferase-like protein (hnmt-like).</title>
        <authorList>
            <person name="Drozak J."/>
            <person name="Chrobok L."/>
            <person name="Poleszak O."/>
            <person name="Jagielski A.K."/>
            <person name="Derlacz R."/>
        </authorList>
    </citation>
    <scope>NUCLEOTIDE SEQUENCE [MRNA]</scope>
    <scope>FUNCTION</scope>
    <scope>CATALYTIC ACTIVITY</scope>
    <scope>SUBUNIT</scope>
    <source>
        <tissue evidence="5">Pectoralis muscle</tissue>
    </source>
</reference>
<reference key="2">
    <citation type="journal article" date="2004" name="Nature">
        <title>Sequence and comparative analysis of the chicken genome provide unique perspectives on vertebrate evolution.</title>
        <authorList>
            <person name="Hillier L.W."/>
            <person name="Miller W."/>
            <person name="Birney E."/>
            <person name="Warren W."/>
            <person name="Hardison R.C."/>
            <person name="Ponting C.P."/>
            <person name="Bork P."/>
            <person name="Burt D.W."/>
            <person name="Groenen M.A.M."/>
            <person name="Delany M.E."/>
            <person name="Dodgson J.B."/>
            <person name="Chinwalla A.T."/>
            <person name="Cliften P.F."/>
            <person name="Clifton S.W."/>
            <person name="Delehaunty K.D."/>
            <person name="Fronick C."/>
            <person name="Fulton R.S."/>
            <person name="Graves T.A."/>
            <person name="Kremitzki C."/>
            <person name="Layman D."/>
            <person name="Magrini V."/>
            <person name="McPherson J.D."/>
            <person name="Miner T.L."/>
            <person name="Minx P."/>
            <person name="Nash W.E."/>
            <person name="Nhan M.N."/>
            <person name="Nelson J.O."/>
            <person name="Oddy L.G."/>
            <person name="Pohl C.S."/>
            <person name="Randall-Maher J."/>
            <person name="Smith S.M."/>
            <person name="Wallis J.W."/>
            <person name="Yang S.-P."/>
            <person name="Romanov M.N."/>
            <person name="Rondelli C.M."/>
            <person name="Paton B."/>
            <person name="Smith J."/>
            <person name="Morrice D."/>
            <person name="Daniels L."/>
            <person name="Tempest H.G."/>
            <person name="Robertson L."/>
            <person name="Masabanda J.S."/>
            <person name="Griffin D.K."/>
            <person name="Vignal A."/>
            <person name="Fillon V."/>
            <person name="Jacobbson L."/>
            <person name="Kerje S."/>
            <person name="Andersson L."/>
            <person name="Crooijmans R.P."/>
            <person name="Aerts J."/>
            <person name="van der Poel J.J."/>
            <person name="Ellegren H."/>
            <person name="Caldwell R.B."/>
            <person name="Hubbard S.J."/>
            <person name="Grafham D.V."/>
            <person name="Kierzek A.M."/>
            <person name="McLaren S.R."/>
            <person name="Overton I.M."/>
            <person name="Arakawa H."/>
            <person name="Beattie K.J."/>
            <person name="Bezzubov Y."/>
            <person name="Boardman P.E."/>
            <person name="Bonfield J.K."/>
            <person name="Croning M.D.R."/>
            <person name="Davies R.M."/>
            <person name="Francis M.D."/>
            <person name="Humphray S.J."/>
            <person name="Scott C.E."/>
            <person name="Taylor R.G."/>
            <person name="Tickle C."/>
            <person name="Brown W.R.A."/>
            <person name="Rogers J."/>
            <person name="Buerstedde J.-M."/>
            <person name="Wilson S.A."/>
            <person name="Stubbs L."/>
            <person name="Ovcharenko I."/>
            <person name="Gordon L."/>
            <person name="Lucas S."/>
            <person name="Miller M.M."/>
            <person name="Inoko H."/>
            <person name="Shiina T."/>
            <person name="Kaufman J."/>
            <person name="Salomonsen J."/>
            <person name="Skjoedt K."/>
            <person name="Wong G.K.-S."/>
            <person name="Wang J."/>
            <person name="Liu B."/>
            <person name="Wang J."/>
            <person name="Yu J."/>
            <person name="Yang H."/>
            <person name="Nefedov M."/>
            <person name="Koriabine M."/>
            <person name="Dejong P.J."/>
            <person name="Goodstadt L."/>
            <person name="Webber C."/>
            <person name="Dickens N.J."/>
            <person name="Letunic I."/>
            <person name="Suyama M."/>
            <person name="Torrents D."/>
            <person name="von Mering C."/>
            <person name="Zdobnov E.M."/>
            <person name="Makova K."/>
            <person name="Nekrutenko A."/>
            <person name="Elnitski L."/>
            <person name="Eswara P."/>
            <person name="King D.C."/>
            <person name="Yang S.-P."/>
            <person name="Tyekucheva S."/>
            <person name="Radakrishnan A."/>
            <person name="Harris R.S."/>
            <person name="Chiaromonte F."/>
            <person name="Taylor J."/>
            <person name="He J."/>
            <person name="Rijnkels M."/>
            <person name="Griffiths-Jones S."/>
            <person name="Ureta-Vidal A."/>
            <person name="Hoffman M.M."/>
            <person name="Severin J."/>
            <person name="Searle S.M.J."/>
            <person name="Law A.S."/>
            <person name="Speed D."/>
            <person name="Waddington D."/>
            <person name="Cheng Z."/>
            <person name="Tuzun E."/>
            <person name="Eichler E."/>
            <person name="Bao Z."/>
            <person name="Flicek P."/>
            <person name="Shteynberg D.D."/>
            <person name="Brent M.R."/>
            <person name="Bye J.M."/>
            <person name="Huckle E.J."/>
            <person name="Chatterji S."/>
            <person name="Dewey C."/>
            <person name="Pachter L."/>
            <person name="Kouranov A."/>
            <person name="Mourelatos Z."/>
            <person name="Hatzigeorgiou A.G."/>
            <person name="Paterson A.H."/>
            <person name="Ivarie R."/>
            <person name="Brandstrom M."/>
            <person name="Axelsson E."/>
            <person name="Backstrom N."/>
            <person name="Berlin S."/>
            <person name="Webster M.T."/>
            <person name="Pourquie O."/>
            <person name="Reymond A."/>
            <person name="Ucla C."/>
            <person name="Antonarakis S.E."/>
            <person name="Long M."/>
            <person name="Emerson J.J."/>
            <person name="Betran E."/>
            <person name="Dupanloup I."/>
            <person name="Kaessmann H."/>
            <person name="Hinrichs A.S."/>
            <person name="Bejerano G."/>
            <person name="Furey T.S."/>
            <person name="Harte R.A."/>
            <person name="Raney B."/>
            <person name="Siepel A."/>
            <person name="Kent W.J."/>
            <person name="Haussler D."/>
            <person name="Eyras E."/>
            <person name="Castelo R."/>
            <person name="Abril J.F."/>
            <person name="Castellano S."/>
            <person name="Camara F."/>
            <person name="Parra G."/>
            <person name="Guigo R."/>
            <person name="Bourque G."/>
            <person name="Tesler G."/>
            <person name="Pevzner P.A."/>
            <person name="Smit A."/>
            <person name="Fulton L.A."/>
            <person name="Mardis E.R."/>
            <person name="Wilson R.K."/>
        </authorList>
    </citation>
    <scope>NUCLEOTIDE SEQUENCE [LARGE SCALE GENOMIC DNA]</scope>
    <source>
        <strain>Red jungle fowl</strain>
    </source>
</reference>